<comment type="function">
    <text evidence="1">Acts as a negative regulator of G1 to S cell cycle phase progression by inhibiting cyclin-dependent kinases. Inhibitory effects are additive with GADD45 proteins but also occur in the absence of GADD45 proteins. Acts as a repressor of the orphan nuclear receptor NR4A1 by inhibiting AB domain-mediated transcriptional activity. May be involved in the hormone-mediated regulation of NR4A1 transcriptional activity. May play a role in mitochondrial protein synthesis.</text>
</comment>
<comment type="subunit">
    <text evidence="1">Component of the mitochondrial ribosome large subunit (39S) which comprises a 16S rRNA and about 50 distinct proteins. Interacts with GADD45A, GADD45B and GADD45G. Interacts with NR4A1 via the NR4A1 AB domain. Interacts with ATAD3A and ATAD3B.</text>
</comment>
<comment type="subcellular location">
    <subcellularLocation>
        <location evidence="1">Mitochondrion</location>
    </subcellularLocation>
    <subcellularLocation>
        <location evidence="1">Nucleus</location>
    </subcellularLocation>
    <text evidence="1">Using N-terminally tagged constructs, has been found in the nucleus. C-terminally tagged constructs are targeted exclusively to mitochondria. This discrepancy may be explained by masking of a potential N-terminal mitochondrial targeting signal by the tag.</text>
</comment>
<comment type="similarity">
    <text evidence="4">Belongs to the mitochondrion-specific ribosomal protein mL64 family.</text>
</comment>
<sequence>MAALAMRSGYLLRLSVALGPRSRSYRAPPPPRRRPGPHSPDPENLLTPRWQLTPRYVAKQFGRHGAISGVPPASLWPTPEQLRELEAEEQEWYPSLATMQESLRLQQQALEARRQAREQRIAECMAKMPQMIENWRKQKRERWEKIQADKERRARLQAEAQERLGYHVDPRSARFQELLQDLDKQQRKRLKEERQRQKKEARIAAMASAEAQDSAVSGEPSS</sequence>
<evidence type="ECO:0000250" key="1">
    <source>
        <dbReference type="UniProtKB" id="Q8TAE8"/>
    </source>
</evidence>
<evidence type="ECO:0000255" key="2"/>
<evidence type="ECO:0000256" key="3">
    <source>
        <dbReference type="SAM" id="MobiDB-lite"/>
    </source>
</evidence>
<evidence type="ECO:0000305" key="4"/>
<organism>
    <name type="scientific">Mus musculus</name>
    <name type="common">Mouse</name>
    <dbReference type="NCBI Taxonomy" id="10090"/>
    <lineage>
        <taxon>Eukaryota</taxon>
        <taxon>Metazoa</taxon>
        <taxon>Chordata</taxon>
        <taxon>Craniata</taxon>
        <taxon>Vertebrata</taxon>
        <taxon>Euteleostomi</taxon>
        <taxon>Mammalia</taxon>
        <taxon>Eutheria</taxon>
        <taxon>Euarchontoglires</taxon>
        <taxon>Glires</taxon>
        <taxon>Rodentia</taxon>
        <taxon>Myomorpha</taxon>
        <taxon>Muroidea</taxon>
        <taxon>Muridae</taxon>
        <taxon>Murinae</taxon>
        <taxon>Mus</taxon>
        <taxon>Mus</taxon>
    </lineage>
</organism>
<proteinExistence type="evidence at protein level"/>
<dbReference type="EMBL" id="AK002738">
    <property type="protein sequence ID" value="BAB22318.1"/>
    <property type="molecule type" value="mRNA"/>
</dbReference>
<dbReference type="EMBL" id="AK003314">
    <property type="protein sequence ID" value="BAB22710.1"/>
    <property type="molecule type" value="mRNA"/>
</dbReference>
<dbReference type="EMBL" id="AK028227">
    <property type="protein sequence ID" value="BAC25826.1"/>
    <property type="molecule type" value="mRNA"/>
</dbReference>
<dbReference type="EMBL" id="AK009723">
    <property type="protein sequence ID" value="BAB26464.1"/>
    <property type="molecule type" value="mRNA"/>
</dbReference>
<dbReference type="EMBL" id="AK019570">
    <property type="protein sequence ID" value="BAB31797.1"/>
    <property type="molecule type" value="mRNA"/>
</dbReference>
<dbReference type="EMBL" id="BC061069">
    <property type="protein sequence ID" value="AAH61069.1"/>
    <property type="molecule type" value="mRNA"/>
</dbReference>
<dbReference type="CCDS" id="CCDS22478.1"/>
<dbReference type="RefSeq" id="NP_899202.3">
    <property type="nucleotide sequence ID" value="NM_183358.4"/>
</dbReference>
<dbReference type="SMR" id="Q9CR59"/>
<dbReference type="BioGRID" id="221787">
    <property type="interactions" value="5"/>
</dbReference>
<dbReference type="ComplexPortal" id="CPX-5302">
    <property type="entry name" value="39S mitochondrial large ribosomal subunit"/>
</dbReference>
<dbReference type="DIP" id="DIP-61653N"/>
<dbReference type="FunCoup" id="Q9CR59">
    <property type="interactions" value="1178"/>
</dbReference>
<dbReference type="STRING" id="10090.ENSMUSP00000037783"/>
<dbReference type="GlyGen" id="Q9CR59">
    <property type="glycosylation" value="1 site"/>
</dbReference>
<dbReference type="iPTMnet" id="Q9CR59"/>
<dbReference type="PhosphoSitePlus" id="Q9CR59"/>
<dbReference type="jPOST" id="Q9CR59"/>
<dbReference type="PaxDb" id="10090-ENSMUSP00000037783"/>
<dbReference type="PeptideAtlas" id="Q9CR59"/>
<dbReference type="ProteomicsDB" id="267550"/>
<dbReference type="Pumba" id="Q9CR59"/>
<dbReference type="Antibodypedia" id="26334">
    <property type="antibodies" value="161 antibodies from 31 providers"/>
</dbReference>
<dbReference type="DNASU" id="102060"/>
<dbReference type="Ensembl" id="ENSMUST00000036734.6">
    <property type="protein sequence ID" value="ENSMUSP00000037783.6"/>
    <property type="gene ID" value="ENSMUSG00000033751.6"/>
</dbReference>
<dbReference type="GeneID" id="102060"/>
<dbReference type="KEGG" id="mmu:102060"/>
<dbReference type="UCSC" id="uc009mnj.1">
    <property type="organism name" value="mouse"/>
</dbReference>
<dbReference type="AGR" id="MGI:1914947"/>
<dbReference type="CTD" id="90480"/>
<dbReference type="MGI" id="MGI:1914947">
    <property type="gene designation" value="Gadd45gip1"/>
</dbReference>
<dbReference type="VEuPathDB" id="HostDB:ENSMUSG00000033751"/>
<dbReference type="eggNOG" id="KOG4848">
    <property type="taxonomic scope" value="Eukaryota"/>
</dbReference>
<dbReference type="GeneTree" id="ENSGT00390000013719"/>
<dbReference type="HOGENOM" id="CLU_102022_0_0_1"/>
<dbReference type="InParanoid" id="Q9CR59"/>
<dbReference type="OMA" id="DHRDPKF"/>
<dbReference type="OrthoDB" id="6247992at2759"/>
<dbReference type="PhylomeDB" id="Q9CR59"/>
<dbReference type="TreeFam" id="TF323794"/>
<dbReference type="Reactome" id="R-MMU-5389840">
    <property type="pathway name" value="Mitochondrial translation elongation"/>
</dbReference>
<dbReference type="Reactome" id="R-MMU-5419276">
    <property type="pathway name" value="Mitochondrial translation termination"/>
</dbReference>
<dbReference type="BioGRID-ORCS" id="102060">
    <property type="hits" value="19 hits in 79 CRISPR screens"/>
</dbReference>
<dbReference type="ChiTaRS" id="Gadd45gip1">
    <property type="organism name" value="mouse"/>
</dbReference>
<dbReference type="PRO" id="PR:Q9CR59"/>
<dbReference type="Proteomes" id="UP000000589">
    <property type="component" value="Chromosome 8"/>
</dbReference>
<dbReference type="RNAct" id="Q9CR59">
    <property type="molecule type" value="protein"/>
</dbReference>
<dbReference type="Bgee" id="ENSMUSG00000033751">
    <property type="expression patterns" value="Expressed in left lobe of liver and 240 other cell types or tissues"/>
</dbReference>
<dbReference type="GO" id="GO:0005743">
    <property type="term" value="C:mitochondrial inner membrane"/>
    <property type="evidence" value="ECO:0000303"/>
    <property type="project" value="ComplexPortal"/>
</dbReference>
<dbReference type="GO" id="GO:0005762">
    <property type="term" value="C:mitochondrial large ribosomal subunit"/>
    <property type="evidence" value="ECO:0000303"/>
    <property type="project" value="ComplexPortal"/>
</dbReference>
<dbReference type="GO" id="GO:0005739">
    <property type="term" value="C:mitochondrion"/>
    <property type="evidence" value="ECO:0007005"/>
    <property type="project" value="MGI"/>
</dbReference>
<dbReference type="GO" id="GO:0005654">
    <property type="term" value="C:nucleoplasm"/>
    <property type="evidence" value="ECO:0007669"/>
    <property type="project" value="Ensembl"/>
</dbReference>
<dbReference type="GO" id="GO:0032543">
    <property type="term" value="P:mitochondrial translation"/>
    <property type="evidence" value="ECO:0000303"/>
    <property type="project" value="ComplexPortal"/>
</dbReference>
<dbReference type="Gene3D" id="6.10.280.120">
    <property type="entry name" value="Growth arrest and DNA-damage-inducible proteins-interacting protein 1"/>
    <property type="match status" value="1"/>
</dbReference>
<dbReference type="InterPro" id="IPR018472">
    <property type="entry name" value="Ribosomal_mL64"/>
</dbReference>
<dbReference type="InterPro" id="IPR043035">
    <property type="entry name" value="Ribosomal_mL64_sf"/>
</dbReference>
<dbReference type="PANTHER" id="PTHR31761">
    <property type="entry name" value="GROWTH ARREST AND DNA DAMAGE-INDUCIBLE PROTEINS-INTERACTING PROTEIN 1 GADD45GIP1"/>
    <property type="match status" value="1"/>
</dbReference>
<dbReference type="PANTHER" id="PTHR31761:SF1">
    <property type="entry name" value="LARGE RIBOSOMAL SUBUNIT PROTEIN ML64"/>
    <property type="match status" value="1"/>
</dbReference>
<dbReference type="Pfam" id="PF10147">
    <property type="entry name" value="CR6_interact"/>
    <property type="match status" value="1"/>
</dbReference>
<reference key="1">
    <citation type="journal article" date="2005" name="Science">
        <title>The transcriptional landscape of the mammalian genome.</title>
        <authorList>
            <person name="Carninci P."/>
            <person name="Kasukawa T."/>
            <person name="Katayama S."/>
            <person name="Gough J."/>
            <person name="Frith M.C."/>
            <person name="Maeda N."/>
            <person name="Oyama R."/>
            <person name="Ravasi T."/>
            <person name="Lenhard B."/>
            <person name="Wells C."/>
            <person name="Kodzius R."/>
            <person name="Shimokawa K."/>
            <person name="Bajic V.B."/>
            <person name="Brenner S.E."/>
            <person name="Batalov S."/>
            <person name="Forrest A.R."/>
            <person name="Zavolan M."/>
            <person name="Davis M.J."/>
            <person name="Wilming L.G."/>
            <person name="Aidinis V."/>
            <person name="Allen J.E."/>
            <person name="Ambesi-Impiombato A."/>
            <person name="Apweiler R."/>
            <person name="Aturaliya R.N."/>
            <person name="Bailey T.L."/>
            <person name="Bansal M."/>
            <person name="Baxter L."/>
            <person name="Beisel K.W."/>
            <person name="Bersano T."/>
            <person name="Bono H."/>
            <person name="Chalk A.M."/>
            <person name="Chiu K.P."/>
            <person name="Choudhary V."/>
            <person name="Christoffels A."/>
            <person name="Clutterbuck D.R."/>
            <person name="Crowe M.L."/>
            <person name="Dalla E."/>
            <person name="Dalrymple B.P."/>
            <person name="de Bono B."/>
            <person name="Della Gatta G."/>
            <person name="di Bernardo D."/>
            <person name="Down T."/>
            <person name="Engstrom P."/>
            <person name="Fagiolini M."/>
            <person name="Faulkner G."/>
            <person name="Fletcher C.F."/>
            <person name="Fukushima T."/>
            <person name="Furuno M."/>
            <person name="Futaki S."/>
            <person name="Gariboldi M."/>
            <person name="Georgii-Hemming P."/>
            <person name="Gingeras T.R."/>
            <person name="Gojobori T."/>
            <person name="Green R.E."/>
            <person name="Gustincich S."/>
            <person name="Harbers M."/>
            <person name="Hayashi Y."/>
            <person name="Hensch T.K."/>
            <person name="Hirokawa N."/>
            <person name="Hill D."/>
            <person name="Huminiecki L."/>
            <person name="Iacono M."/>
            <person name="Ikeo K."/>
            <person name="Iwama A."/>
            <person name="Ishikawa T."/>
            <person name="Jakt M."/>
            <person name="Kanapin A."/>
            <person name="Katoh M."/>
            <person name="Kawasawa Y."/>
            <person name="Kelso J."/>
            <person name="Kitamura H."/>
            <person name="Kitano H."/>
            <person name="Kollias G."/>
            <person name="Krishnan S.P."/>
            <person name="Kruger A."/>
            <person name="Kummerfeld S.K."/>
            <person name="Kurochkin I.V."/>
            <person name="Lareau L.F."/>
            <person name="Lazarevic D."/>
            <person name="Lipovich L."/>
            <person name="Liu J."/>
            <person name="Liuni S."/>
            <person name="McWilliam S."/>
            <person name="Madan Babu M."/>
            <person name="Madera M."/>
            <person name="Marchionni L."/>
            <person name="Matsuda H."/>
            <person name="Matsuzawa S."/>
            <person name="Miki H."/>
            <person name="Mignone F."/>
            <person name="Miyake S."/>
            <person name="Morris K."/>
            <person name="Mottagui-Tabar S."/>
            <person name="Mulder N."/>
            <person name="Nakano N."/>
            <person name="Nakauchi H."/>
            <person name="Ng P."/>
            <person name="Nilsson R."/>
            <person name="Nishiguchi S."/>
            <person name="Nishikawa S."/>
            <person name="Nori F."/>
            <person name="Ohara O."/>
            <person name="Okazaki Y."/>
            <person name="Orlando V."/>
            <person name="Pang K.C."/>
            <person name="Pavan W.J."/>
            <person name="Pavesi G."/>
            <person name="Pesole G."/>
            <person name="Petrovsky N."/>
            <person name="Piazza S."/>
            <person name="Reed J."/>
            <person name="Reid J.F."/>
            <person name="Ring B.Z."/>
            <person name="Ringwald M."/>
            <person name="Rost B."/>
            <person name="Ruan Y."/>
            <person name="Salzberg S.L."/>
            <person name="Sandelin A."/>
            <person name="Schneider C."/>
            <person name="Schoenbach C."/>
            <person name="Sekiguchi K."/>
            <person name="Semple C.A."/>
            <person name="Seno S."/>
            <person name="Sessa L."/>
            <person name="Sheng Y."/>
            <person name="Shibata Y."/>
            <person name="Shimada H."/>
            <person name="Shimada K."/>
            <person name="Silva D."/>
            <person name="Sinclair B."/>
            <person name="Sperling S."/>
            <person name="Stupka E."/>
            <person name="Sugiura K."/>
            <person name="Sultana R."/>
            <person name="Takenaka Y."/>
            <person name="Taki K."/>
            <person name="Tammoja K."/>
            <person name="Tan S.L."/>
            <person name="Tang S."/>
            <person name="Taylor M.S."/>
            <person name="Tegner J."/>
            <person name="Teichmann S.A."/>
            <person name="Ueda H.R."/>
            <person name="van Nimwegen E."/>
            <person name="Verardo R."/>
            <person name="Wei C.L."/>
            <person name="Yagi K."/>
            <person name="Yamanishi H."/>
            <person name="Zabarovsky E."/>
            <person name="Zhu S."/>
            <person name="Zimmer A."/>
            <person name="Hide W."/>
            <person name="Bult C."/>
            <person name="Grimmond S.M."/>
            <person name="Teasdale R.D."/>
            <person name="Liu E.T."/>
            <person name="Brusic V."/>
            <person name="Quackenbush J."/>
            <person name="Wahlestedt C."/>
            <person name="Mattick J.S."/>
            <person name="Hume D.A."/>
            <person name="Kai C."/>
            <person name="Sasaki D."/>
            <person name="Tomaru Y."/>
            <person name="Fukuda S."/>
            <person name="Kanamori-Katayama M."/>
            <person name="Suzuki M."/>
            <person name="Aoki J."/>
            <person name="Arakawa T."/>
            <person name="Iida J."/>
            <person name="Imamura K."/>
            <person name="Itoh M."/>
            <person name="Kato T."/>
            <person name="Kawaji H."/>
            <person name="Kawagashira N."/>
            <person name="Kawashima T."/>
            <person name="Kojima M."/>
            <person name="Kondo S."/>
            <person name="Konno H."/>
            <person name="Nakano K."/>
            <person name="Ninomiya N."/>
            <person name="Nishio T."/>
            <person name="Okada M."/>
            <person name="Plessy C."/>
            <person name="Shibata K."/>
            <person name="Shiraki T."/>
            <person name="Suzuki S."/>
            <person name="Tagami M."/>
            <person name="Waki K."/>
            <person name="Watahiki A."/>
            <person name="Okamura-Oho Y."/>
            <person name="Suzuki H."/>
            <person name="Kawai J."/>
            <person name="Hayashizaki Y."/>
        </authorList>
    </citation>
    <scope>NUCLEOTIDE SEQUENCE [LARGE SCALE MRNA]</scope>
    <source>
        <strain>C57BL/6J</strain>
        <tissue>Kidney</tissue>
        <tissue>Testis</tissue>
        <tissue>Tongue</tissue>
    </source>
</reference>
<reference key="2">
    <citation type="journal article" date="2004" name="Genome Res.">
        <title>The status, quality, and expansion of the NIH full-length cDNA project: the Mammalian Gene Collection (MGC).</title>
        <authorList>
            <consortium name="The MGC Project Team"/>
        </authorList>
    </citation>
    <scope>NUCLEOTIDE SEQUENCE [LARGE SCALE MRNA]</scope>
    <source>
        <tissue>Testis</tissue>
    </source>
</reference>
<reference key="3">
    <citation type="journal article" date="2010" name="Cell">
        <title>A tissue-specific atlas of mouse protein phosphorylation and expression.</title>
        <authorList>
            <person name="Huttlin E.L."/>
            <person name="Jedrychowski M.P."/>
            <person name="Elias J.E."/>
            <person name="Goswami T."/>
            <person name="Rad R."/>
            <person name="Beausoleil S.A."/>
            <person name="Villen J."/>
            <person name="Haas W."/>
            <person name="Sowa M.E."/>
            <person name="Gygi S.P."/>
        </authorList>
    </citation>
    <scope>IDENTIFICATION BY MASS SPECTROMETRY [LARGE SCALE ANALYSIS]</scope>
    <source>
        <tissue>Brain</tissue>
        <tissue>Brown adipose tissue</tissue>
        <tissue>Heart</tissue>
        <tissue>Kidney</tissue>
        <tissue>Liver</tissue>
        <tissue>Spleen</tissue>
        <tissue>Testis</tissue>
    </source>
</reference>
<protein>
    <recommendedName>
        <fullName evidence="4">Large ribosomal subunit protein mL64</fullName>
    </recommendedName>
    <alternativeName>
        <fullName>39S ribosomal protein L59, mitochondrial</fullName>
        <shortName>MRP-L59</shortName>
    </alternativeName>
    <alternativeName>
        <fullName>Growth arrest and DNA damage-inducible proteins-interacting protein 1</fullName>
    </alternativeName>
</protein>
<feature type="chain" id="PRO_0000228621" description="Large ribosomal subunit protein mL64">
    <location>
        <begin position="1"/>
        <end position="222"/>
    </location>
</feature>
<feature type="region of interest" description="Disordered" evidence="3">
    <location>
        <begin position="21"/>
        <end position="47"/>
    </location>
</feature>
<feature type="region of interest" description="Disordered" evidence="3">
    <location>
        <begin position="186"/>
        <end position="222"/>
    </location>
</feature>
<feature type="coiled-coil region" evidence="2">
    <location>
        <begin position="98"/>
        <end position="207"/>
    </location>
</feature>
<feature type="short sequence motif" description="Nuclear localization signal" evidence="2">
    <location>
        <begin position="184"/>
        <end position="200"/>
    </location>
</feature>
<feature type="compositionally biased region" description="Basic and acidic residues" evidence="3">
    <location>
        <begin position="186"/>
        <end position="202"/>
    </location>
</feature>
<feature type="compositionally biased region" description="Low complexity" evidence="3">
    <location>
        <begin position="203"/>
        <end position="215"/>
    </location>
</feature>
<feature type="sequence conflict" description="In Ref. 1; BAC25826." evidence="4" ref="1">
    <original>K</original>
    <variation>Q</variation>
    <location>
        <position position="184"/>
    </location>
</feature>
<name>G45IP_MOUSE</name>
<keyword id="KW-0131">Cell cycle</keyword>
<keyword id="KW-0175">Coiled coil</keyword>
<keyword id="KW-0496">Mitochondrion</keyword>
<keyword id="KW-0539">Nucleus</keyword>
<keyword id="KW-1185">Reference proteome</keyword>
<keyword id="KW-0687">Ribonucleoprotein</keyword>
<keyword id="KW-0689">Ribosomal protein</keyword>
<accession>Q9CR59</accession>
<accession>Q8BT05</accession>
<gene>
    <name type="primary">Gadd45gip1</name>
    <name type="synonym">Mrpl59</name>
</gene>